<protein>
    <recommendedName>
        <fullName>Calcium/calmodulin-dependent protein kinase type IV</fullName>
        <shortName>CaMK IV</shortName>
        <ecNumber>2.7.11.17</ecNumber>
    </recommendedName>
    <alternativeName>
        <fullName>CaM kinase-GR</fullName>
    </alternativeName>
</protein>
<reference key="1">
    <citation type="journal article" date="1991" name="FEBS Lett.">
        <title>cDNA sequence and differential expression of the mouse Ca2+/calmodulin-dependent protein kinase IV gene.</title>
        <authorList>
            <person name="Jones D.A."/>
            <person name="Glod J."/>
            <person name="Wilson-Shaw D."/>
            <person name="Hahn W.E."/>
            <person name="Sikela J.M."/>
        </authorList>
    </citation>
    <scope>NUCLEOTIDE SEQUENCE [MRNA]</scope>
    <source>
        <strain>BALB/cJ</strain>
        <tissue>Brain</tissue>
    </source>
</reference>
<reference key="2">
    <citation type="journal article" date="1989" name="Genomics">
        <title>Chromosomal localization of the human gene for brain Ca2+/calmodulin-dependent protein kinase type IV.</title>
        <authorList>
            <person name="Sikela J.M."/>
            <person name="Law M.L."/>
            <person name="Kao F.-T."/>
            <person name="Hartz J.A."/>
            <person name="Wei Q."/>
            <person name="Hahn W.E."/>
        </authorList>
    </citation>
    <scope>NUCLEOTIDE SEQUENCE [MRNA] OF 240-469</scope>
</reference>
<reference key="3">
    <citation type="journal article" date="1987" name="Proc. Natl. Acad. Sci. U.S.A.">
        <title>Screening an expression library with a ligand probe: isolation and sequence of a cDNA corresponding to a brain calmodulin-binding protein.</title>
        <authorList>
            <person name="Sikela J.M."/>
            <person name="Hahn W.E."/>
        </authorList>
    </citation>
    <scope>NUCLEOTIDE SEQUENCE [MRNA] OF 315-469</scope>
    <source>
        <tissue>Brain</tissue>
    </source>
</reference>
<reference key="4">
    <citation type="journal article" date="1994" name="J. Biol. Chem.">
        <title>Characterization of Ca2+/calmodulin-dependent protein kinase IV. Role in transcriptional regulation.</title>
        <authorList>
            <person name="Enslen H."/>
            <person name="Sun P."/>
            <person name="Brickey D."/>
            <person name="Soderling S.H."/>
            <person name="Klamo E."/>
            <person name="Soderling T.R."/>
        </authorList>
    </citation>
    <scope>FUNCTION IN PHOSPHORYLATION OF CREB1</scope>
</reference>
<reference key="5">
    <citation type="journal article" date="1998" name="Science">
        <title>CBP: a signal-regulated transcriptional coactivator controlled by nuclear calcium and CaM kinase IV.</title>
        <authorList>
            <person name="Chawla S."/>
            <person name="Hardingham G.E."/>
            <person name="Quinn D.R."/>
            <person name="Bading H."/>
        </authorList>
    </citation>
    <scope>FUNCTION IN PHOSPHORYLATION OF CREBBP</scope>
</reference>
<reference key="6">
    <citation type="journal article" date="2000" name="Nat. Genet.">
        <title>Spermiogenesis and exchange of basic nuclear proteins are impaired in male germ cells lacking Camk4.</title>
        <authorList>
            <person name="Wu J.Y."/>
            <person name="Ribar T.J."/>
            <person name="Cummings D.E."/>
            <person name="Burton K.A."/>
            <person name="McKnight G.S."/>
            <person name="Means A.R."/>
        </authorList>
    </citation>
    <scope>FUNCTION IN PHOSPHORYLATION OF PRM2</scope>
    <scope>TISSUE SPECIFICITY</scope>
    <scope>SUBCELLULAR LOCATION</scope>
    <scope>DISRUPTION PHENOTYPE</scope>
</reference>
<reference key="7">
    <citation type="journal article" date="2001" name="Cell">
        <title>An important role of neural activity-dependent CaMKIV signaling in the consolidation of long-term memory.</title>
        <authorList>
            <person name="Kang H."/>
            <person name="Sun L.D."/>
            <person name="Atkins C.M."/>
            <person name="Soderling T.R."/>
            <person name="Wilson M.A."/>
            <person name="Tonegawa S."/>
        </authorList>
    </citation>
    <scope>FUNCTION</scope>
</reference>
<reference key="8">
    <citation type="journal article" date="2002" name="Science">
        <title>Regulation of mitochondrial biogenesis in skeletal muscle by CaMK.</title>
        <authorList>
            <person name="Wu H."/>
            <person name="Kanatous S.B."/>
            <person name="Thurmond F.A."/>
            <person name="Gallardo T."/>
            <person name="Isotani E."/>
            <person name="Bassel-Duby R."/>
            <person name="Williams R.S."/>
        </authorList>
    </citation>
    <scope>TISSUE SPECIFICITY</scope>
</reference>
<reference key="9">
    <citation type="journal article" date="2008" name="J. Neurosci.">
        <title>Upregulation of calcium/calmodulin-dependent protein kinase IV improves memory formation and rescues memory loss with aging.</title>
        <authorList>
            <person name="Fukushima H."/>
            <person name="Maeda R."/>
            <person name="Suzuki R."/>
            <person name="Suzuki A."/>
            <person name="Nomoto M."/>
            <person name="Toyoda H."/>
            <person name="Wu L.J."/>
            <person name="Xu H."/>
            <person name="Zhao M.G."/>
            <person name="Ueda K."/>
            <person name="Kitamoto A."/>
            <person name="Mamiya N."/>
            <person name="Yoshida T."/>
            <person name="Homma S."/>
            <person name="Masushige S."/>
            <person name="Zhuo M."/>
            <person name="Kida S."/>
        </authorList>
    </citation>
    <scope>FUNCTION</scope>
</reference>
<reference key="10">
    <citation type="journal article" date="2010" name="Cell">
        <title>A tissue-specific atlas of mouse protein phosphorylation and expression.</title>
        <authorList>
            <person name="Huttlin E.L."/>
            <person name="Jedrychowski M.P."/>
            <person name="Elias J.E."/>
            <person name="Goswami T."/>
            <person name="Rad R."/>
            <person name="Beausoleil S.A."/>
            <person name="Villen J."/>
            <person name="Haas W."/>
            <person name="Sowa M.E."/>
            <person name="Gygi S.P."/>
        </authorList>
    </citation>
    <scope>PHOSPHORYLATION [LARGE SCALE ANALYSIS] AT THR-196 AND SER-439</scope>
    <scope>IDENTIFICATION BY MASS SPECTROMETRY [LARGE SCALE ANALYSIS]</scope>
    <source>
        <tissue>Brain</tissue>
        <tissue>Lung</tissue>
    </source>
</reference>
<dbReference type="EC" id="2.7.11.17"/>
<dbReference type="EMBL" id="M16206">
    <property type="protein sequence ID" value="AAA39933.1"/>
    <property type="molecule type" value="mRNA"/>
</dbReference>
<dbReference type="EMBL" id="M64266">
    <property type="protein sequence ID" value="AAA37364.1"/>
    <property type="molecule type" value="mRNA"/>
</dbReference>
<dbReference type="EMBL" id="J03057">
    <property type="protein sequence ID" value="AAA37366.1"/>
    <property type="molecule type" value="mRNA"/>
</dbReference>
<dbReference type="EMBL" id="X58995">
    <property type="protein sequence ID" value="CAA41741.1"/>
    <property type="molecule type" value="mRNA"/>
</dbReference>
<dbReference type="CCDS" id="CCDS29122.1"/>
<dbReference type="PIR" id="S17656">
    <property type="entry name" value="S17656"/>
</dbReference>
<dbReference type="SMR" id="P08414"/>
<dbReference type="FunCoup" id="P08414">
    <property type="interactions" value="471"/>
</dbReference>
<dbReference type="IntAct" id="P08414">
    <property type="interactions" value="3"/>
</dbReference>
<dbReference type="MINT" id="P08414"/>
<dbReference type="STRING" id="10090.ENSMUSP00000046539"/>
<dbReference type="GlyCosmos" id="P08414">
    <property type="glycosylation" value="7 sites, No reported glycans"/>
</dbReference>
<dbReference type="GlyGen" id="P08414">
    <property type="glycosylation" value="9 sites, 1 O-linked glycan (2 sites)"/>
</dbReference>
<dbReference type="iPTMnet" id="P08414"/>
<dbReference type="PhosphoSitePlus" id="P08414"/>
<dbReference type="SwissPalm" id="P08414"/>
<dbReference type="PaxDb" id="10090-ENSMUSP00000046539"/>
<dbReference type="PeptideAtlas" id="P08414"/>
<dbReference type="ProteomicsDB" id="263584"/>
<dbReference type="AGR" id="MGI:88258"/>
<dbReference type="MGI" id="MGI:88258">
    <property type="gene designation" value="Camk4"/>
</dbReference>
<dbReference type="eggNOG" id="KOG0032">
    <property type="taxonomic scope" value="Eukaryota"/>
</dbReference>
<dbReference type="InParanoid" id="P08414"/>
<dbReference type="PhylomeDB" id="P08414"/>
<dbReference type="BRENDA" id="2.7.11.17">
    <property type="organism ID" value="3474"/>
</dbReference>
<dbReference type="Reactome" id="R-MMU-111932">
    <property type="pathway name" value="CaMK IV-mediated phosphorylation of CREB"/>
</dbReference>
<dbReference type="Reactome" id="R-MMU-442729">
    <property type="pathway name" value="CREB1 phosphorylation through the activation of CaMKII/CaMKK/CaMKIV cascasde"/>
</dbReference>
<dbReference type="ChiTaRS" id="Camk4">
    <property type="organism name" value="mouse"/>
</dbReference>
<dbReference type="PRO" id="PR:P08414"/>
<dbReference type="Proteomes" id="UP000000589">
    <property type="component" value="Unplaced"/>
</dbReference>
<dbReference type="RNAct" id="P08414">
    <property type="molecule type" value="protein"/>
</dbReference>
<dbReference type="GO" id="GO:0005737">
    <property type="term" value="C:cytoplasm"/>
    <property type="evidence" value="ECO:0000314"/>
    <property type="project" value="MGI"/>
</dbReference>
<dbReference type="GO" id="GO:0005829">
    <property type="term" value="C:cytosol"/>
    <property type="evidence" value="ECO:0000304"/>
    <property type="project" value="Reactome"/>
</dbReference>
<dbReference type="GO" id="GO:0098982">
    <property type="term" value="C:GABA-ergic synapse"/>
    <property type="evidence" value="ECO:0000314"/>
    <property type="project" value="SynGO"/>
</dbReference>
<dbReference type="GO" id="GO:0098978">
    <property type="term" value="C:glutamatergic synapse"/>
    <property type="evidence" value="ECO:0000314"/>
    <property type="project" value="SynGO"/>
</dbReference>
<dbReference type="GO" id="GO:0005654">
    <property type="term" value="C:nucleoplasm"/>
    <property type="evidence" value="ECO:0000304"/>
    <property type="project" value="Reactome"/>
</dbReference>
<dbReference type="GO" id="GO:0005634">
    <property type="term" value="C:nucleus"/>
    <property type="evidence" value="ECO:0000314"/>
    <property type="project" value="MGI"/>
</dbReference>
<dbReference type="GO" id="GO:0098794">
    <property type="term" value="C:postsynapse"/>
    <property type="evidence" value="ECO:0007669"/>
    <property type="project" value="GOC"/>
</dbReference>
<dbReference type="GO" id="GO:0005524">
    <property type="term" value="F:ATP binding"/>
    <property type="evidence" value="ECO:0007669"/>
    <property type="project" value="UniProtKB-KW"/>
</dbReference>
<dbReference type="GO" id="GO:0004683">
    <property type="term" value="F:calcium/calmodulin-dependent protein kinase activity"/>
    <property type="evidence" value="ECO:0000304"/>
    <property type="project" value="MGI"/>
</dbReference>
<dbReference type="GO" id="GO:0005516">
    <property type="term" value="F:calmodulin binding"/>
    <property type="evidence" value="ECO:0007669"/>
    <property type="project" value="UniProtKB-KW"/>
</dbReference>
<dbReference type="GO" id="GO:0106310">
    <property type="term" value="F:protein serine kinase activity"/>
    <property type="evidence" value="ECO:0007669"/>
    <property type="project" value="RHEA"/>
</dbReference>
<dbReference type="GO" id="GO:0002250">
    <property type="term" value="P:adaptive immune response"/>
    <property type="evidence" value="ECO:0007669"/>
    <property type="project" value="UniProtKB-KW"/>
</dbReference>
<dbReference type="GO" id="GO:0006954">
    <property type="term" value="P:inflammatory response"/>
    <property type="evidence" value="ECO:0007669"/>
    <property type="project" value="UniProtKB-KW"/>
</dbReference>
<dbReference type="GO" id="GO:0007616">
    <property type="term" value="P:long-term memory"/>
    <property type="evidence" value="ECO:0000250"/>
    <property type="project" value="UniProtKB"/>
</dbReference>
<dbReference type="GO" id="GO:0043011">
    <property type="term" value="P:myeloid dendritic cell differentiation"/>
    <property type="evidence" value="ECO:0000250"/>
    <property type="project" value="UniProtKB"/>
</dbReference>
<dbReference type="GO" id="GO:0007270">
    <property type="term" value="P:neuron-neuron synaptic transmission"/>
    <property type="evidence" value="ECO:0000315"/>
    <property type="project" value="MGI"/>
</dbReference>
<dbReference type="GO" id="GO:0006913">
    <property type="term" value="P:nucleocytoplasmic transport"/>
    <property type="evidence" value="ECO:0000314"/>
    <property type="project" value="MGI"/>
</dbReference>
<dbReference type="GO" id="GO:0045893">
    <property type="term" value="P:positive regulation of DNA-templated transcription"/>
    <property type="evidence" value="ECO:0000315"/>
    <property type="project" value="MGI"/>
</dbReference>
<dbReference type="GO" id="GO:0046827">
    <property type="term" value="P:positive regulation of protein export from nucleus"/>
    <property type="evidence" value="ECO:0000314"/>
    <property type="project" value="MGI"/>
</dbReference>
<dbReference type="GO" id="GO:0099527">
    <property type="term" value="P:postsynapse to nucleus signaling pathway"/>
    <property type="evidence" value="ECO:0000314"/>
    <property type="project" value="SynGO"/>
</dbReference>
<dbReference type="GO" id="GO:0099170">
    <property type="term" value="P:postsynaptic modulation of chemical synaptic transmission"/>
    <property type="evidence" value="ECO:0000314"/>
    <property type="project" value="SynGO"/>
</dbReference>
<dbReference type="GO" id="GO:0007165">
    <property type="term" value="P:signal transduction"/>
    <property type="evidence" value="ECO:0000314"/>
    <property type="project" value="MGI"/>
</dbReference>
<dbReference type="CDD" id="cd14085">
    <property type="entry name" value="STKc_CaMKIV"/>
    <property type="match status" value="1"/>
</dbReference>
<dbReference type="FunFam" id="1.10.510.10:FF:000255">
    <property type="entry name" value="Calcium/calmodulin-dependent protein kinase type IV"/>
    <property type="match status" value="1"/>
</dbReference>
<dbReference type="FunFam" id="3.30.200.20:FF:000279">
    <property type="entry name" value="Calcium/calmodulin-dependent protein kinase type IV"/>
    <property type="match status" value="1"/>
</dbReference>
<dbReference type="Gene3D" id="3.30.200.20">
    <property type="entry name" value="Phosphorylase Kinase, domain 1"/>
    <property type="match status" value="1"/>
</dbReference>
<dbReference type="Gene3D" id="1.10.510.10">
    <property type="entry name" value="Transferase(Phosphotransferase) domain 1"/>
    <property type="match status" value="1"/>
</dbReference>
<dbReference type="InterPro" id="IPR011009">
    <property type="entry name" value="Kinase-like_dom_sf"/>
</dbReference>
<dbReference type="InterPro" id="IPR000719">
    <property type="entry name" value="Prot_kinase_dom"/>
</dbReference>
<dbReference type="InterPro" id="IPR017441">
    <property type="entry name" value="Protein_kinase_ATP_BS"/>
</dbReference>
<dbReference type="InterPro" id="IPR008271">
    <property type="entry name" value="Ser/Thr_kinase_AS"/>
</dbReference>
<dbReference type="PANTHER" id="PTHR24347">
    <property type="entry name" value="SERINE/THREONINE-PROTEIN KINASE"/>
    <property type="match status" value="1"/>
</dbReference>
<dbReference type="Pfam" id="PF00069">
    <property type="entry name" value="Pkinase"/>
    <property type="match status" value="1"/>
</dbReference>
<dbReference type="SMART" id="SM00220">
    <property type="entry name" value="S_TKc"/>
    <property type="match status" value="1"/>
</dbReference>
<dbReference type="SUPFAM" id="SSF56112">
    <property type="entry name" value="Protein kinase-like (PK-like)"/>
    <property type="match status" value="1"/>
</dbReference>
<dbReference type="PROSITE" id="PS00107">
    <property type="entry name" value="PROTEIN_KINASE_ATP"/>
    <property type="match status" value="1"/>
</dbReference>
<dbReference type="PROSITE" id="PS50011">
    <property type="entry name" value="PROTEIN_KINASE_DOM"/>
    <property type="match status" value="1"/>
</dbReference>
<dbReference type="PROSITE" id="PS00108">
    <property type="entry name" value="PROTEIN_KINASE_ST"/>
    <property type="match status" value="1"/>
</dbReference>
<feature type="chain" id="PRO_0000086107" description="Calcium/calmodulin-dependent protein kinase type IV">
    <location>
        <begin position="1"/>
        <end position="469"/>
    </location>
</feature>
<feature type="domain" description="Protein kinase" evidence="5">
    <location>
        <begin position="42"/>
        <end position="296"/>
    </location>
</feature>
<feature type="region of interest" description="Autoinhibitory domain" evidence="1">
    <location>
        <begin position="297"/>
        <end position="336"/>
    </location>
</feature>
<feature type="region of interest" description="PP2A-binding" evidence="1">
    <location>
        <begin position="302"/>
        <end position="319"/>
    </location>
</feature>
<feature type="region of interest" description="Calmodulin-binding" evidence="4">
    <location>
        <begin position="318"/>
        <end position="337"/>
    </location>
</feature>
<feature type="region of interest" description="Disordered" evidence="7">
    <location>
        <begin position="336"/>
        <end position="469"/>
    </location>
</feature>
<feature type="compositionally biased region" description="Basic and acidic residues" evidence="7">
    <location>
        <begin position="360"/>
        <end position="374"/>
    </location>
</feature>
<feature type="compositionally biased region" description="Acidic residues" evidence="7">
    <location>
        <begin position="375"/>
        <end position="388"/>
    </location>
</feature>
<feature type="compositionally biased region" description="Basic and acidic residues" evidence="7">
    <location>
        <begin position="389"/>
        <end position="409"/>
    </location>
</feature>
<feature type="compositionally biased region" description="Acidic residues" evidence="7">
    <location>
        <begin position="417"/>
        <end position="426"/>
    </location>
</feature>
<feature type="compositionally biased region" description="Basic and acidic residues" evidence="7">
    <location>
        <begin position="427"/>
        <end position="441"/>
    </location>
</feature>
<feature type="compositionally biased region" description="Acidic residues" evidence="7">
    <location>
        <begin position="442"/>
        <end position="453"/>
    </location>
</feature>
<feature type="active site" description="Proton acceptor" evidence="5 6">
    <location>
        <position position="160"/>
    </location>
</feature>
<feature type="binding site" evidence="5">
    <location>
        <begin position="48"/>
        <end position="56"/>
    </location>
    <ligand>
        <name>ATP</name>
        <dbReference type="ChEBI" id="CHEBI:30616"/>
    </ligand>
</feature>
<feature type="binding site" evidence="5">
    <location>
        <position position="71"/>
    </location>
    <ligand>
        <name>ATP</name>
        <dbReference type="ChEBI" id="CHEBI:30616"/>
    </ligand>
</feature>
<feature type="modified residue" description="Phosphoserine; by autocatalysis" evidence="1">
    <location>
        <position position="11"/>
    </location>
</feature>
<feature type="modified residue" description="Phosphoserine; by autocatalysis" evidence="3">
    <location>
        <position position="12"/>
    </location>
</feature>
<feature type="modified residue" description="Phosphothreonine" evidence="15">
    <location>
        <position position="196"/>
    </location>
</feature>
<feature type="modified residue" description="Phosphoserine; by autocatalysis" evidence="2">
    <location>
        <position position="332"/>
    </location>
</feature>
<feature type="modified residue" description="Phosphoserine" evidence="2">
    <location>
        <position position="337"/>
    </location>
</feature>
<feature type="modified residue" description="Phosphoserine" evidence="2">
    <location>
        <position position="433"/>
    </location>
</feature>
<feature type="modified residue" description="Phosphoserine" evidence="15">
    <location>
        <position position="439"/>
    </location>
</feature>
<feature type="glycosylation site" description="O-linked (GlcNAc) threonine" evidence="1">
    <location>
        <position position="53"/>
    </location>
</feature>
<feature type="glycosylation site" description="O-linked (GlcNAc) serine" evidence="1">
    <location>
        <position position="54"/>
    </location>
</feature>
<feature type="glycosylation site" description="O-linked (GlcNAc) serine" evidence="1">
    <location>
        <position position="133"/>
    </location>
</feature>
<feature type="glycosylation site" description="O-linked (GlcNAc) serine" evidence="1">
    <location>
        <position position="185"/>
    </location>
</feature>
<feature type="glycosylation site" description="O-linked (GlcNAc) serine" evidence="1">
    <location>
        <position position="340"/>
    </location>
</feature>
<feature type="glycosylation site" description="O-linked (GlcNAc) serine" evidence="1">
    <location>
        <position position="341"/>
    </location>
</feature>
<feature type="glycosylation site" description="O-linked (GlcNAc) serine" evidence="1">
    <location>
        <position position="352"/>
    </location>
</feature>
<feature type="sequence conflict" description="In Ref. 2; AAA37366." evidence="14" ref="2">
    <original>VLD</original>
    <variation>CFGI</variation>
    <location>
        <begin position="278"/>
        <end position="280"/>
    </location>
</feature>
<feature type="sequence conflict" description="In Ref. 2; AAA37366." evidence="14" ref="2">
    <original>N</original>
    <variation>T</variation>
    <location>
        <position position="302"/>
    </location>
</feature>
<gene>
    <name type="primary">Camk4</name>
</gene>
<accession>P08414</accession>
<accession>Q61381</accession>
<evidence type="ECO:0000250" key="1"/>
<evidence type="ECO:0000250" key="2">
    <source>
        <dbReference type="UniProtKB" id="P13234"/>
    </source>
</evidence>
<evidence type="ECO:0000250" key="3">
    <source>
        <dbReference type="UniProtKB" id="Q16566"/>
    </source>
</evidence>
<evidence type="ECO:0000255" key="4"/>
<evidence type="ECO:0000255" key="5">
    <source>
        <dbReference type="PROSITE-ProRule" id="PRU00159"/>
    </source>
</evidence>
<evidence type="ECO:0000255" key="6">
    <source>
        <dbReference type="PROSITE-ProRule" id="PRU10027"/>
    </source>
</evidence>
<evidence type="ECO:0000256" key="7">
    <source>
        <dbReference type="SAM" id="MobiDB-lite"/>
    </source>
</evidence>
<evidence type="ECO:0000269" key="8">
    <source>
    </source>
</evidence>
<evidence type="ECO:0000269" key="9">
    <source>
    </source>
</evidence>
<evidence type="ECO:0000269" key="10">
    <source>
    </source>
</evidence>
<evidence type="ECO:0000269" key="11">
    <source>
    </source>
</evidence>
<evidence type="ECO:0000269" key="12">
    <source>
    </source>
</evidence>
<evidence type="ECO:0000269" key="13">
    <source>
    </source>
</evidence>
<evidence type="ECO:0000305" key="14"/>
<evidence type="ECO:0007744" key="15">
    <source>
    </source>
</evidence>
<keyword id="KW-1064">Adaptive immunity</keyword>
<keyword id="KW-0067">ATP-binding</keyword>
<keyword id="KW-0106">Calcium</keyword>
<keyword id="KW-0112">Calmodulin-binding</keyword>
<keyword id="KW-0963">Cytoplasm</keyword>
<keyword id="KW-0325">Glycoprotein</keyword>
<keyword id="KW-0391">Immunity</keyword>
<keyword id="KW-0395">Inflammatory response</keyword>
<keyword id="KW-0418">Kinase</keyword>
<keyword id="KW-0547">Nucleotide-binding</keyword>
<keyword id="KW-0539">Nucleus</keyword>
<keyword id="KW-0597">Phosphoprotein</keyword>
<keyword id="KW-1185">Reference proteome</keyword>
<keyword id="KW-0723">Serine/threonine-protein kinase</keyword>
<keyword id="KW-0808">Transferase</keyword>
<proteinExistence type="evidence at protein level"/>
<comment type="function">
    <text evidence="1 8 9 11 12 13">Calcium/calmodulin-dependent protein kinase that operates in the calcium-triggered CaMKK-CaMK4 signaling cascade and regulates, mainly by phosphorylation, the activity of several transcription activators, such as CREB1, MEF2D, JUN and RORA, which play pivotal roles in immune response, inflammation, and memory consolidation. In the thymus, regulates the CD4(+)/CD8(+) double positive thymocytes selection threshold during T-cell ontogeny. In CD4 memory T-cells, is required to link T-cell antigen receptor (TCR) signaling to the production of IL2, IFNG and IL4 (through the regulation of CREB and MEF2). Regulates the differentiation and survival phases of osteoclasts and dendritic cells (DCs). Mediates DCs survival by linking TLR4 and the regulation of temporal expression of BCL2. Phosphorylates the transcription activator CREB1 on 'Ser-133' in hippocampal neuron nuclei and contribute to memory consolidation and long term potentiation (LTP) in the hippocampus. Can activate the MAP kinases MAPK1/ERK2, MAPK8/JNK1 and MAPK14/p38 and stimulate transcription through the phosphorylation of ELK1 and ATF2. Can also phosphorylate in vitro CREBBP, PRM2, MEF2A and STMN1/OP18 (By similarity). May be involved in spermatogenesis.</text>
</comment>
<comment type="catalytic activity">
    <reaction>
        <text>L-seryl-[protein] + ATP = O-phospho-L-seryl-[protein] + ADP + H(+)</text>
        <dbReference type="Rhea" id="RHEA:17989"/>
        <dbReference type="Rhea" id="RHEA-COMP:9863"/>
        <dbReference type="Rhea" id="RHEA-COMP:11604"/>
        <dbReference type="ChEBI" id="CHEBI:15378"/>
        <dbReference type="ChEBI" id="CHEBI:29999"/>
        <dbReference type="ChEBI" id="CHEBI:30616"/>
        <dbReference type="ChEBI" id="CHEBI:83421"/>
        <dbReference type="ChEBI" id="CHEBI:456216"/>
        <dbReference type="EC" id="2.7.11.17"/>
    </reaction>
</comment>
<comment type="catalytic activity">
    <reaction>
        <text>L-threonyl-[protein] + ATP = O-phospho-L-threonyl-[protein] + ADP + H(+)</text>
        <dbReference type="Rhea" id="RHEA:46608"/>
        <dbReference type="Rhea" id="RHEA-COMP:11060"/>
        <dbReference type="Rhea" id="RHEA-COMP:11605"/>
        <dbReference type="ChEBI" id="CHEBI:15378"/>
        <dbReference type="ChEBI" id="CHEBI:30013"/>
        <dbReference type="ChEBI" id="CHEBI:30616"/>
        <dbReference type="ChEBI" id="CHEBI:61977"/>
        <dbReference type="ChEBI" id="CHEBI:456216"/>
        <dbReference type="EC" id="2.7.11.17"/>
    </reaction>
</comment>
<comment type="activity regulation">
    <text>Activated by Ca(2+)/calmodulin. Binding of calmodulin results in conformational change that relieves intrasteric autoinhibition and allows phosphorylation of Thr-196 within the activation loop by CaMKK1 or CaMKK2. Phosphorylation of Thr-196 results in a 10-20-fold increase in total activity to generate Ca(2+)/calmodulin-independent activity. Autophosphorylation of the N-terminus Ser-11 and Ser-12 is required for full activation. Inactivated by protein phosphatase 2A (PPP2CA/PPP2CB) which dephosphorylates Thr-196, thereby terminating autonomous activity and helping to maintain the enzyme in its autoinhibited state.</text>
</comment>
<comment type="subunit">
    <text evidence="1">Monomer. Interacts with protein phosphatase 2A (PPP2CA/PPP2CB); the interaction is mutually exclusive with binding to Ca(2+)/calmodulin.</text>
</comment>
<comment type="subcellular location">
    <subcellularLocation>
        <location evidence="8">Cytoplasm</location>
    </subcellularLocation>
    <subcellularLocation>
        <location evidence="8">Nucleus</location>
    </subcellularLocation>
    <text evidence="1">Localized in hippocampal neuron nuclei (By similarity). In spermatids, associated with chromatin and nuclear matrix.</text>
</comment>
<comment type="tissue specificity">
    <text evidence="8 10">Expressed in brain and testis.</text>
</comment>
<comment type="domain">
    <text evidence="1">The autoinhibitory domain overlaps with the calmodulin binding region and interacts in the inactive folded state with the catalytic domain as a pseudosubstrate.</text>
</comment>
<comment type="PTM">
    <text evidence="1">Phosphorylated by CaMKK1 and CaMKK2 on Thr-196. Dephosphorylated by protein phosphatase 2A. Autophosphorylated on Ser-11 and Ser-12 (By similarity).</text>
</comment>
<comment type="PTM">
    <text evidence="1">Glycosylation at Ser-185 modulates the phosphorylation of CaMK4 at Thr-196 and negatively regulates its activity toward CREB1 in basal conditions and during early inomycin stimulation.</text>
</comment>
<comment type="disruption phenotype">
    <text evidence="8">Male mice are infertile with impairment of spermiogenesis in late elongating spermatids. The sequential deposition of sperm basic nuclear proteins on chromatin is disrupted, with a specific loss of protamine-2 and prolonged retention of Tnp2 in step-15 spermatids.</text>
</comment>
<comment type="similarity">
    <text evidence="14">Belongs to the protein kinase superfamily. CAMK Ser/Thr protein kinase family. CaMK subfamily.</text>
</comment>
<sequence length="469" mass="52628">MLKVTVPSCPSSPCSSVTASTENLVPDYWIDGSNRDPLGDFFEVESELGRGATSIVYRCKQKGTQKPYALKVLKKTVDKKIVRTEIGVLLRLSHPNIIKLKEIFETPTEISLVLELVTGGELFDRIVEKGYYSERDARDAVKQILEAVAYLHENGIVHRDLKPENLLYATPAPDAPLKIADFGLSKIVEHQVLMKTVCGTPGYCAPEILRGCAYGPEVDMWSVGIITYILLCGFEPFYDERGDQFMFRRILNCEYYFISPWWDEVSLNAKDLVKKLIVLDPKKRLTTFQALQHPWVTGKAANFVHMDTAQKKLQEFNARRKLKAAVKAVVASSRLGSASSSHTSIQENHKASSDPPSTQDAKDSTDLLGKKMQEEDQEEDQVEAEASADEMRKLQSEEVEKDAGVKEEETSSMVPQDPEDELETDDPEMKRDSEEKLKSVEEEMDPMTEEEAPDAGLGVPQQDAIQPEY</sequence>
<organism>
    <name type="scientific">Mus musculus</name>
    <name type="common">Mouse</name>
    <dbReference type="NCBI Taxonomy" id="10090"/>
    <lineage>
        <taxon>Eukaryota</taxon>
        <taxon>Metazoa</taxon>
        <taxon>Chordata</taxon>
        <taxon>Craniata</taxon>
        <taxon>Vertebrata</taxon>
        <taxon>Euteleostomi</taxon>
        <taxon>Mammalia</taxon>
        <taxon>Eutheria</taxon>
        <taxon>Euarchontoglires</taxon>
        <taxon>Glires</taxon>
        <taxon>Rodentia</taxon>
        <taxon>Myomorpha</taxon>
        <taxon>Muroidea</taxon>
        <taxon>Muridae</taxon>
        <taxon>Murinae</taxon>
        <taxon>Mus</taxon>
        <taxon>Mus</taxon>
    </lineage>
</organism>
<name>KCC4_MOUSE</name>